<organism>
    <name type="scientific">Mytilus galloprovincialis</name>
    <name type="common">Mediterranean mussel</name>
    <dbReference type="NCBI Taxonomy" id="29158"/>
    <lineage>
        <taxon>Eukaryota</taxon>
        <taxon>Metazoa</taxon>
        <taxon>Spiralia</taxon>
        <taxon>Lophotrochozoa</taxon>
        <taxon>Mollusca</taxon>
        <taxon>Bivalvia</taxon>
        <taxon>Autobranchia</taxon>
        <taxon>Pteriomorphia</taxon>
        <taxon>Mytilida</taxon>
        <taxon>Mytiloidea</taxon>
        <taxon>Mytilidae</taxon>
        <taxon>Mytilinae</taxon>
        <taxon>Mytilus</taxon>
    </lineage>
</organism>
<comment type="subcellular location">
    <subcellularLocation>
        <location evidence="2">Secreted</location>
    </subcellularLocation>
</comment>
<comment type="tissue specificity">
    <text evidence="2">Component of the organic matrix of calcified shell layers like nacre and prisms.</text>
</comment>
<evidence type="ECO:0000255" key="1"/>
<evidence type="ECO:0000269" key="2">
    <source>
    </source>
</evidence>
<evidence type="ECO:0000303" key="3">
    <source>
    </source>
</evidence>
<evidence type="ECO:0000305" key="4"/>
<protein>
    <recommendedName>
        <fullName evidence="3">Mytilin-1</fullName>
    </recommendedName>
    <alternativeName>
        <fullName evidence="3">Mytilus uncharacterized protein 1</fullName>
        <shortName evidence="3">MUSP-1</shortName>
    </alternativeName>
</protein>
<reference evidence="4" key="1">
    <citation type="journal article" date="2009" name="BMC Genomics">
        <title>MytiBase: a knowledgebase of mussel (M. galloprovincialis) transcribed sequences.</title>
        <authorList>
            <person name="Venier P."/>
            <person name="De Pitta C."/>
            <person name="Bernante F."/>
            <person name="Varotto L."/>
            <person name="De Nardi B."/>
            <person name="Bovo G."/>
            <person name="Roch P."/>
            <person name="Novoa B."/>
            <person name="Figueras A."/>
            <person name="Pallavicini A."/>
            <person name="Lanfranchi G."/>
        </authorList>
    </citation>
    <scope>NUCLEOTIDE SEQUENCE [MRNA]</scope>
</reference>
<reference evidence="4" key="2">
    <citation type="journal article" date="2011" name="J. Mol. Evol.">
        <title>Molecular evolution of mollusc shell proteins: insights from proteomic analysis of the edible mussel mytilus.</title>
        <authorList>
            <person name="Marie B."/>
            <person name="Le Roy N."/>
            <person name="Zanella-Cleon I."/>
            <person name="Becchi M."/>
            <person name="Marin F."/>
        </authorList>
    </citation>
    <scope>PROTEIN SEQUENCE OF 33-40 AND 88-108</scope>
    <scope>SUBCELLULAR LOCATION</scope>
    <scope>TISSUE SPECIFICITY</scope>
    <source>
        <tissue evidence="2">Shell</tissue>
    </source>
</reference>
<proteinExistence type="evidence at protein level"/>
<accession>P86853</accession>
<name>MYT1_MYTGA</name>
<keyword id="KW-0903">Direct protein sequencing</keyword>
<keyword id="KW-0964">Secreted</keyword>
<keyword id="KW-0732">Signal</keyword>
<sequence>MISKYCLFVIVLGTTGTALVLTNDSNKLQNVKAVIAIQDKVLHFHDHTTDCVGELMCIFAALPESERNQTLSIPLGLLTTIATDKGRDRYSSIYAEAKKLLAGYPTIKHALNAAENGHSTKDKNVCASMYSKCPFEPDDLLDTINDLEDITTLFSKNVFGKVIADAIEYNYTQVGMTQTHS</sequence>
<dbReference type="EMBL" id="FL490251">
    <property type="status" value="NOT_ANNOTATED_CDS"/>
    <property type="molecule type" value="mRNA"/>
</dbReference>
<dbReference type="GO" id="GO:0005576">
    <property type="term" value="C:extracellular region"/>
    <property type="evidence" value="ECO:0007669"/>
    <property type="project" value="UniProtKB-SubCell"/>
</dbReference>
<feature type="signal peptide" evidence="1">
    <location>
        <begin position="1"/>
        <end position="22"/>
    </location>
</feature>
<feature type="chain" id="PRO_0000404089" description="Mytilin-1" evidence="1">
    <location>
        <begin position="23"/>
        <end position="181"/>
    </location>
</feature>
<feature type="non-terminal residue" evidence="4">
    <location>
        <position position="181"/>
    </location>
</feature>